<reference key="1">
    <citation type="journal article" date="2007" name="J. Bacteriol.">
        <title>Genome sequence analysis of the emerging human pathogenic acetic acid bacterium Granulibacter bethesdensis.</title>
        <authorList>
            <person name="Greenberg D.E."/>
            <person name="Porcella S.F."/>
            <person name="Zelazny A.M."/>
            <person name="Virtaneva K."/>
            <person name="Sturdevant D.E."/>
            <person name="Kupko J.J. III"/>
            <person name="Barbian K.D."/>
            <person name="Babar A."/>
            <person name="Dorward D.W."/>
            <person name="Holland S.M."/>
        </authorList>
    </citation>
    <scope>NUCLEOTIDE SEQUENCE [LARGE SCALE GENOMIC DNA]</scope>
    <source>
        <strain>ATCC BAA-1260 / CGDNIH1</strain>
    </source>
</reference>
<evidence type="ECO:0000255" key="1">
    <source>
        <dbReference type="HAMAP-Rule" id="MF_00636"/>
    </source>
</evidence>
<evidence type="ECO:0000256" key="2">
    <source>
        <dbReference type="SAM" id="MobiDB-lite"/>
    </source>
</evidence>
<gene>
    <name type="ordered locus">GbCGDNIH1_0395</name>
</gene>
<feature type="chain" id="PRO_0000383248" description="Nucleotide-binding protein GbCGDNIH1_0395">
    <location>
        <begin position="1"/>
        <end position="324"/>
    </location>
</feature>
<feature type="region of interest" description="Disordered" evidence="2">
    <location>
        <begin position="286"/>
        <end position="324"/>
    </location>
</feature>
<feature type="compositionally biased region" description="Basic and acidic residues" evidence="2">
    <location>
        <begin position="299"/>
        <end position="311"/>
    </location>
</feature>
<feature type="binding site" evidence="1">
    <location>
        <begin position="14"/>
        <end position="21"/>
    </location>
    <ligand>
        <name>ATP</name>
        <dbReference type="ChEBI" id="CHEBI:30616"/>
    </ligand>
</feature>
<feature type="binding site" evidence="1">
    <location>
        <begin position="59"/>
        <end position="62"/>
    </location>
    <ligand>
        <name>GTP</name>
        <dbReference type="ChEBI" id="CHEBI:37565"/>
    </ligand>
</feature>
<organism>
    <name type="scientific">Granulibacter bethesdensis (strain ATCC BAA-1260 / CGDNIH1)</name>
    <dbReference type="NCBI Taxonomy" id="391165"/>
    <lineage>
        <taxon>Bacteria</taxon>
        <taxon>Pseudomonadati</taxon>
        <taxon>Pseudomonadota</taxon>
        <taxon>Alphaproteobacteria</taxon>
        <taxon>Acetobacterales</taxon>
        <taxon>Acetobacteraceae</taxon>
        <taxon>Granulibacter</taxon>
    </lineage>
</organism>
<dbReference type="EMBL" id="CP000394">
    <property type="protein sequence ID" value="ABI61293.1"/>
    <property type="molecule type" value="Genomic_DNA"/>
</dbReference>
<dbReference type="RefSeq" id="WP_011631103.1">
    <property type="nucleotide sequence ID" value="NC_008343.2"/>
</dbReference>
<dbReference type="SMR" id="Q0BV59"/>
<dbReference type="STRING" id="391165.GbCGDNIH1_0395"/>
<dbReference type="GeneID" id="69744655"/>
<dbReference type="KEGG" id="gbe:GbCGDNIH1_0395"/>
<dbReference type="eggNOG" id="COG1660">
    <property type="taxonomic scope" value="Bacteria"/>
</dbReference>
<dbReference type="HOGENOM" id="CLU_059558_0_0_5"/>
<dbReference type="OrthoDB" id="9784461at2"/>
<dbReference type="Proteomes" id="UP000001963">
    <property type="component" value="Chromosome"/>
</dbReference>
<dbReference type="GO" id="GO:0005524">
    <property type="term" value="F:ATP binding"/>
    <property type="evidence" value="ECO:0007669"/>
    <property type="project" value="UniProtKB-UniRule"/>
</dbReference>
<dbReference type="GO" id="GO:0005525">
    <property type="term" value="F:GTP binding"/>
    <property type="evidence" value="ECO:0007669"/>
    <property type="project" value="UniProtKB-UniRule"/>
</dbReference>
<dbReference type="HAMAP" id="MF_00636">
    <property type="entry name" value="RapZ_like"/>
    <property type="match status" value="1"/>
</dbReference>
<dbReference type="InterPro" id="IPR027417">
    <property type="entry name" value="P-loop_NTPase"/>
</dbReference>
<dbReference type="InterPro" id="IPR005337">
    <property type="entry name" value="RapZ-like"/>
</dbReference>
<dbReference type="InterPro" id="IPR053930">
    <property type="entry name" value="RapZ-like_N"/>
</dbReference>
<dbReference type="InterPro" id="IPR053931">
    <property type="entry name" value="RapZ_C"/>
</dbReference>
<dbReference type="NCBIfam" id="NF003828">
    <property type="entry name" value="PRK05416.1"/>
    <property type="match status" value="1"/>
</dbReference>
<dbReference type="PANTHER" id="PTHR30448">
    <property type="entry name" value="RNASE ADAPTER PROTEIN RAPZ"/>
    <property type="match status" value="1"/>
</dbReference>
<dbReference type="PANTHER" id="PTHR30448:SF0">
    <property type="entry name" value="RNASE ADAPTER PROTEIN RAPZ"/>
    <property type="match status" value="1"/>
</dbReference>
<dbReference type="Pfam" id="PF22740">
    <property type="entry name" value="PapZ_C"/>
    <property type="match status" value="1"/>
</dbReference>
<dbReference type="Pfam" id="PF03668">
    <property type="entry name" value="RapZ-like_N"/>
    <property type="match status" value="1"/>
</dbReference>
<dbReference type="PIRSF" id="PIRSF005052">
    <property type="entry name" value="P-loopkin"/>
    <property type="match status" value="1"/>
</dbReference>
<dbReference type="SUPFAM" id="SSF52540">
    <property type="entry name" value="P-loop containing nucleoside triphosphate hydrolases"/>
    <property type="match status" value="2"/>
</dbReference>
<accession>Q0BV59</accession>
<protein>
    <recommendedName>
        <fullName evidence="1">Nucleotide-binding protein GbCGDNIH1_0395</fullName>
    </recommendedName>
</protein>
<proteinExistence type="inferred from homology"/>
<sequence length="324" mass="35421">MSTDQYRRVVVITGLSGAGKSTILRALEDAGYETVDNPPLPLVHDLVARGEGPLAFAVDARSRGFTADGLALAMERMRQLPGVRADLVFVRADTAALLSRYTETRHRHPLASGVGVRDGIRAEEILTASLVDVADLVVDTTDLPVTRLRAMIAERYGPEETGQGMVVSLISFAYPKGLPREADLVLDARFLRNPHYDPTLKPRTGQDRDVAAYIEADPDYATFHDRIDALLRLLLPRFVQEGKKYATIAIGCTGGRHRSVHLVEKLGEELRAQGWSVLRTHRELGISDDAPQAGAARVSTDDRNGRPEEHGSAQAPDELSRTTS</sequence>
<keyword id="KW-0067">ATP-binding</keyword>
<keyword id="KW-0342">GTP-binding</keyword>
<keyword id="KW-0547">Nucleotide-binding</keyword>
<keyword id="KW-1185">Reference proteome</keyword>
<name>Y395_GRABC</name>
<comment type="function">
    <text evidence="1">Displays ATPase and GTPase activities.</text>
</comment>
<comment type="similarity">
    <text evidence="1">Belongs to the RapZ-like family.</text>
</comment>